<evidence type="ECO:0000255" key="1">
    <source>
        <dbReference type="HAMAP-Rule" id="MF_01103"/>
    </source>
</evidence>
<sequence length="76" mass="8834">MKILDRINELANKEKVQPLTVAEKQEQHALRQDYLSMIRGQVLTTFSTIKVVDPIGQDVTPDKVYDLRQQYGYIQN</sequence>
<feature type="chain" id="PRO_0000094988" description="UPF0291 protein SA2360">
    <location>
        <begin position="1"/>
        <end position="76"/>
    </location>
</feature>
<reference key="1">
    <citation type="journal article" date="2001" name="Lancet">
        <title>Whole genome sequencing of meticillin-resistant Staphylococcus aureus.</title>
        <authorList>
            <person name="Kuroda M."/>
            <person name="Ohta T."/>
            <person name="Uchiyama I."/>
            <person name="Baba T."/>
            <person name="Yuzawa H."/>
            <person name="Kobayashi I."/>
            <person name="Cui L."/>
            <person name="Oguchi A."/>
            <person name="Aoki K."/>
            <person name="Nagai Y."/>
            <person name="Lian J.-Q."/>
            <person name="Ito T."/>
            <person name="Kanamori M."/>
            <person name="Matsumaru H."/>
            <person name="Maruyama A."/>
            <person name="Murakami H."/>
            <person name="Hosoyama A."/>
            <person name="Mizutani-Ui Y."/>
            <person name="Takahashi N.K."/>
            <person name="Sawano T."/>
            <person name="Inoue R."/>
            <person name="Kaito C."/>
            <person name="Sekimizu K."/>
            <person name="Hirakawa H."/>
            <person name="Kuhara S."/>
            <person name="Goto S."/>
            <person name="Yabuzaki J."/>
            <person name="Kanehisa M."/>
            <person name="Yamashita A."/>
            <person name="Oshima K."/>
            <person name="Furuya K."/>
            <person name="Yoshino C."/>
            <person name="Shiba T."/>
            <person name="Hattori M."/>
            <person name="Ogasawara N."/>
            <person name="Hayashi H."/>
            <person name="Hiramatsu K."/>
        </authorList>
    </citation>
    <scope>NUCLEOTIDE SEQUENCE [LARGE SCALE GENOMIC DNA]</scope>
    <source>
        <strain>N315</strain>
    </source>
</reference>
<accession>P60077</accession>
<accession>Q99R65</accession>
<proteinExistence type="inferred from homology"/>
<dbReference type="EMBL" id="BA000018">
    <property type="protein sequence ID" value="BAB43664.1"/>
    <property type="molecule type" value="Genomic_DNA"/>
</dbReference>
<dbReference type="PIR" id="F90062">
    <property type="entry name" value="F90062"/>
</dbReference>
<dbReference type="RefSeq" id="WP_000697134.1">
    <property type="nucleotide sequence ID" value="NC_002745.2"/>
</dbReference>
<dbReference type="SMR" id="P60077"/>
<dbReference type="EnsemblBacteria" id="BAB43664">
    <property type="protein sequence ID" value="BAB43664"/>
    <property type="gene ID" value="BAB43664"/>
</dbReference>
<dbReference type="KEGG" id="sau:SA2360"/>
<dbReference type="HOGENOM" id="CLU_173137_0_2_9"/>
<dbReference type="GO" id="GO:0005737">
    <property type="term" value="C:cytoplasm"/>
    <property type="evidence" value="ECO:0007669"/>
    <property type="project" value="UniProtKB-SubCell"/>
</dbReference>
<dbReference type="Gene3D" id="1.10.287.540">
    <property type="entry name" value="Helix hairpin bin"/>
    <property type="match status" value="1"/>
</dbReference>
<dbReference type="HAMAP" id="MF_01103">
    <property type="entry name" value="UPF0291"/>
    <property type="match status" value="1"/>
</dbReference>
<dbReference type="InterPro" id="IPR009242">
    <property type="entry name" value="DUF896"/>
</dbReference>
<dbReference type="PANTHER" id="PTHR37300:SF2">
    <property type="entry name" value="UPF0291 PROTEIN BC_1827"/>
    <property type="match status" value="1"/>
</dbReference>
<dbReference type="PANTHER" id="PTHR37300">
    <property type="entry name" value="UPF0291 PROTEIN CBO2609/CLC_2481"/>
    <property type="match status" value="1"/>
</dbReference>
<dbReference type="Pfam" id="PF05979">
    <property type="entry name" value="DUF896"/>
    <property type="match status" value="1"/>
</dbReference>
<dbReference type="SUPFAM" id="SSF158221">
    <property type="entry name" value="YnzC-like"/>
    <property type="match status" value="1"/>
</dbReference>
<name>Y2360_STAAN</name>
<organism>
    <name type="scientific">Staphylococcus aureus (strain N315)</name>
    <dbReference type="NCBI Taxonomy" id="158879"/>
    <lineage>
        <taxon>Bacteria</taxon>
        <taxon>Bacillati</taxon>
        <taxon>Bacillota</taxon>
        <taxon>Bacilli</taxon>
        <taxon>Bacillales</taxon>
        <taxon>Staphylococcaceae</taxon>
        <taxon>Staphylococcus</taxon>
    </lineage>
</organism>
<gene>
    <name type="ordered locus">SA2360</name>
</gene>
<keyword id="KW-0963">Cytoplasm</keyword>
<comment type="subcellular location">
    <subcellularLocation>
        <location evidence="1">Cytoplasm</location>
    </subcellularLocation>
</comment>
<comment type="similarity">
    <text evidence="1">Belongs to the UPF0291 family.</text>
</comment>
<protein>
    <recommendedName>
        <fullName evidence="1">UPF0291 protein SA2360</fullName>
    </recommendedName>
</protein>